<name>GEMI8_SCHPO</name>
<reference key="1">
    <citation type="journal article" date="2002" name="Nature">
        <title>The genome sequence of Schizosaccharomyces pombe.</title>
        <authorList>
            <person name="Wood V."/>
            <person name="Gwilliam R."/>
            <person name="Rajandream M.A."/>
            <person name="Lyne M.H."/>
            <person name="Lyne R."/>
            <person name="Stewart A."/>
            <person name="Sgouros J.G."/>
            <person name="Peat N."/>
            <person name="Hayles J."/>
            <person name="Baker S.G."/>
            <person name="Basham D."/>
            <person name="Bowman S."/>
            <person name="Brooks K."/>
            <person name="Brown D."/>
            <person name="Brown S."/>
            <person name="Chillingworth T."/>
            <person name="Churcher C.M."/>
            <person name="Collins M."/>
            <person name="Connor R."/>
            <person name="Cronin A."/>
            <person name="Davis P."/>
            <person name="Feltwell T."/>
            <person name="Fraser A."/>
            <person name="Gentles S."/>
            <person name="Goble A."/>
            <person name="Hamlin N."/>
            <person name="Harris D.E."/>
            <person name="Hidalgo J."/>
            <person name="Hodgson G."/>
            <person name="Holroyd S."/>
            <person name="Hornsby T."/>
            <person name="Howarth S."/>
            <person name="Huckle E.J."/>
            <person name="Hunt S."/>
            <person name="Jagels K."/>
            <person name="James K.D."/>
            <person name="Jones L."/>
            <person name="Jones M."/>
            <person name="Leather S."/>
            <person name="McDonald S."/>
            <person name="McLean J."/>
            <person name="Mooney P."/>
            <person name="Moule S."/>
            <person name="Mungall K.L."/>
            <person name="Murphy L.D."/>
            <person name="Niblett D."/>
            <person name="Odell C."/>
            <person name="Oliver K."/>
            <person name="O'Neil S."/>
            <person name="Pearson D."/>
            <person name="Quail M.A."/>
            <person name="Rabbinowitsch E."/>
            <person name="Rutherford K.M."/>
            <person name="Rutter S."/>
            <person name="Saunders D."/>
            <person name="Seeger K."/>
            <person name="Sharp S."/>
            <person name="Skelton J."/>
            <person name="Simmonds M.N."/>
            <person name="Squares R."/>
            <person name="Squares S."/>
            <person name="Stevens K."/>
            <person name="Taylor K."/>
            <person name="Taylor R.G."/>
            <person name="Tivey A."/>
            <person name="Walsh S.V."/>
            <person name="Warren T."/>
            <person name="Whitehead S."/>
            <person name="Woodward J.R."/>
            <person name="Volckaert G."/>
            <person name="Aert R."/>
            <person name="Robben J."/>
            <person name="Grymonprez B."/>
            <person name="Weltjens I."/>
            <person name="Vanstreels E."/>
            <person name="Rieger M."/>
            <person name="Schaefer M."/>
            <person name="Mueller-Auer S."/>
            <person name="Gabel C."/>
            <person name="Fuchs M."/>
            <person name="Duesterhoeft A."/>
            <person name="Fritzc C."/>
            <person name="Holzer E."/>
            <person name="Moestl D."/>
            <person name="Hilbert H."/>
            <person name="Borzym K."/>
            <person name="Langer I."/>
            <person name="Beck A."/>
            <person name="Lehrach H."/>
            <person name="Reinhardt R."/>
            <person name="Pohl T.M."/>
            <person name="Eger P."/>
            <person name="Zimmermann W."/>
            <person name="Wedler H."/>
            <person name="Wambutt R."/>
            <person name="Purnelle B."/>
            <person name="Goffeau A."/>
            <person name="Cadieu E."/>
            <person name="Dreano S."/>
            <person name="Gloux S."/>
            <person name="Lelaure V."/>
            <person name="Mottier S."/>
            <person name="Galibert F."/>
            <person name="Aves S.J."/>
            <person name="Xiang Z."/>
            <person name="Hunt C."/>
            <person name="Moore K."/>
            <person name="Hurst S.M."/>
            <person name="Lucas M."/>
            <person name="Rochet M."/>
            <person name="Gaillardin C."/>
            <person name="Tallada V.A."/>
            <person name="Garzon A."/>
            <person name="Thode G."/>
            <person name="Daga R.R."/>
            <person name="Cruzado L."/>
            <person name="Jimenez J."/>
            <person name="Sanchez M."/>
            <person name="del Rey F."/>
            <person name="Benito J."/>
            <person name="Dominguez A."/>
            <person name="Revuelta J.L."/>
            <person name="Moreno S."/>
            <person name="Armstrong J."/>
            <person name="Forsburg S.L."/>
            <person name="Cerutti L."/>
            <person name="Lowe T."/>
            <person name="McCombie W.R."/>
            <person name="Paulsen I."/>
            <person name="Potashkin J."/>
            <person name="Shpakovski G.V."/>
            <person name="Ussery D."/>
            <person name="Barrell B.G."/>
            <person name="Nurse P."/>
        </authorList>
    </citation>
    <scope>NUCLEOTIDE SEQUENCE [LARGE SCALE GENOMIC DNA]</scope>
    <source>
        <strain>972 / ATCC 24843</strain>
    </source>
</reference>
<reference key="2">
    <citation type="journal article" date="2006" name="Nat. Biotechnol.">
        <title>ORFeome cloning and global analysis of protein localization in the fission yeast Schizosaccharomyces pombe.</title>
        <authorList>
            <person name="Matsuyama A."/>
            <person name="Arai R."/>
            <person name="Yashiroda Y."/>
            <person name="Shirai A."/>
            <person name="Kamata A."/>
            <person name="Sekido S."/>
            <person name="Kobayashi Y."/>
            <person name="Hashimoto A."/>
            <person name="Hamamoto M."/>
            <person name="Hiraoka Y."/>
            <person name="Horinouchi S."/>
            <person name="Yoshida M."/>
        </authorList>
    </citation>
    <scope>SUBCELLULAR LOCATION [LARGE SCALE ANALYSIS]</scope>
</reference>
<reference key="3">
    <citation type="journal article" date="2021" name="Nucleic Acids Res.">
        <title>Identification and structural analysis of the Schizosaccharomyces pombe SMN complex.</title>
        <authorList>
            <person name="Veepaschit J."/>
            <person name="Viswanathan A."/>
            <person name="Bordonne R."/>
            <person name="Grimm C."/>
            <person name="Fischer U."/>
        </authorList>
    </citation>
    <scope>FUNCTION</scope>
    <scope>IDENTIFICATION IN THE CORE SMN COMPLEX</scope>
    <scope>INTERACTION WITH SMN1 AND GEM7</scope>
    <scope>DISRUPTION PHENOTYPE</scope>
</reference>
<feature type="chain" id="PRO_0000353136" description="Uncharacterized protein C16H5.15">
    <location>
        <begin position="1"/>
        <end position="166"/>
    </location>
</feature>
<feature type="region of interest" description="May interact with smn1" evidence="3">
    <location>
        <begin position="1"/>
        <end position="58"/>
    </location>
</feature>
<dbReference type="EMBL" id="CU329671">
    <property type="protein sequence ID" value="CAB60139.1"/>
    <property type="molecule type" value="Genomic_DNA"/>
</dbReference>
<dbReference type="PIR" id="T39620">
    <property type="entry name" value="T39620"/>
</dbReference>
<dbReference type="RefSeq" id="NP_595942.1">
    <property type="nucleotide sequence ID" value="NM_001021850.2"/>
</dbReference>
<dbReference type="SASBDB" id="Q9USY8"/>
<dbReference type="SMR" id="Q9USY8"/>
<dbReference type="BioGRID" id="276431">
    <property type="interactions" value="6"/>
</dbReference>
<dbReference type="ComplexPortal" id="CPX-25739">
    <property type="entry name" value="Survival motor neuron complex"/>
</dbReference>
<dbReference type="STRING" id="284812.Q9USY8"/>
<dbReference type="PaxDb" id="4896-SPBC16H5.15.1"/>
<dbReference type="EnsemblFungi" id="SPBC16H5.15.1">
    <property type="protein sequence ID" value="SPBC16H5.15.1:pep"/>
    <property type="gene ID" value="SPBC16H5.15"/>
</dbReference>
<dbReference type="GeneID" id="2539885"/>
<dbReference type="KEGG" id="spo:2539885"/>
<dbReference type="PomBase" id="SPBC16H5.15">
    <property type="gene designation" value="gem8"/>
</dbReference>
<dbReference type="VEuPathDB" id="FungiDB:SPBC16H5.15"/>
<dbReference type="eggNOG" id="ENOG502SGGI">
    <property type="taxonomic scope" value="Eukaryota"/>
</dbReference>
<dbReference type="HOGENOM" id="CLU_1603692_0_0_1"/>
<dbReference type="InParanoid" id="Q9USY8"/>
<dbReference type="OMA" id="KFHDEHF"/>
<dbReference type="PRO" id="PR:Q9USY8"/>
<dbReference type="Proteomes" id="UP000002485">
    <property type="component" value="Chromosome II"/>
</dbReference>
<dbReference type="GO" id="GO:0005829">
    <property type="term" value="C:cytosol"/>
    <property type="evidence" value="ECO:0007005"/>
    <property type="project" value="PomBase"/>
</dbReference>
<dbReference type="GO" id="GO:0005634">
    <property type="term" value="C:nucleus"/>
    <property type="evidence" value="ECO:0007005"/>
    <property type="project" value="PomBase"/>
</dbReference>
<dbReference type="GO" id="GO:0032797">
    <property type="term" value="C:SMN complex"/>
    <property type="evidence" value="ECO:0000314"/>
    <property type="project" value="PomBase"/>
</dbReference>
<dbReference type="GO" id="GO:0000387">
    <property type="term" value="P:spliceosomal snRNP assembly"/>
    <property type="evidence" value="ECO:0000315"/>
    <property type="project" value="PomBase"/>
</dbReference>
<dbReference type="InterPro" id="IPR024526">
    <property type="entry name" value="DUF3807"/>
</dbReference>
<dbReference type="PANTHER" id="PTHR40642">
    <property type="entry name" value="YALI0F31295P"/>
    <property type="match status" value="1"/>
</dbReference>
<dbReference type="PANTHER" id="PTHR40642:SF1">
    <property type="entry name" value="YALI0F31295P"/>
    <property type="match status" value="1"/>
</dbReference>
<dbReference type="Pfam" id="PF12720">
    <property type="entry name" value="DUF3807"/>
    <property type="match status" value="1"/>
</dbReference>
<proteinExistence type="evidence at protein level"/>
<protein>
    <recommendedName>
        <fullName>Uncharacterized protein C16H5.15</fullName>
    </recommendedName>
</protein>
<organism>
    <name type="scientific">Schizosaccharomyces pombe (strain 972 / ATCC 24843)</name>
    <name type="common">Fission yeast</name>
    <dbReference type="NCBI Taxonomy" id="284812"/>
    <lineage>
        <taxon>Eukaryota</taxon>
        <taxon>Fungi</taxon>
        <taxon>Dikarya</taxon>
        <taxon>Ascomycota</taxon>
        <taxon>Taphrinomycotina</taxon>
        <taxon>Schizosaccharomycetes</taxon>
        <taxon>Schizosaccharomycetales</taxon>
        <taxon>Schizosaccharomycetaceae</taxon>
        <taxon>Schizosaccharomyces</taxon>
    </lineage>
</organism>
<accession>Q9USY8</accession>
<comment type="function">
    <text evidence="1 5">The SMN complex catalyzes the assembly of small nuclear ribonucleoproteins (snRNPs), the building blocks of the spliceosome, and thereby plays an important role in the splicing of cellular pre-mRNAs (Probable). Most spliceosomal snRNPs contain a common set of Sm proteins SNRPB, SNRPD1, SNRPD2, SNRPD3, SNRPE, SNRPF and SNRPG that assemble in a heptameric protein ring on the Sm site of the small nuclear RNA to form the core snRNP (Sm core) (By similarity). In the cytosol, the Sm proteins SNRPD1, SNRPD2, SNRPE, SNRPF and SNRPG are trapped in an inactive 6S pICln-Sm complex by the chaperone CLNS1A that controls the assembly of the core snRNP (By similarity). To assemble core snRNPs, the SMN complex accepts the trapped 5Sm proteins from CLNS1A forming an intermediate (By similarity). Binding of snRNA inside 5Sm triggers eviction of the SMN complex, thereby allowing binding of SNRPD3 and SNRPB to complete assembly of the core snRNP (By similarity).</text>
</comment>
<comment type="subunit">
    <text evidence="3">Part of the core SMN complex at least composed of smn1, yip11/gem2, gem6, gem7 and gem8 (PubMed:33754639). Interacts with smn1; the interaction is direct (PubMed:33754639). Interacts with gem7; the interaction is direct (PubMed:33754639).</text>
</comment>
<comment type="subcellular location">
    <subcellularLocation>
        <location evidence="2">Cytoplasm</location>
    </subcellularLocation>
    <subcellularLocation>
        <location evidence="2">Nucleus</location>
    </subcellularLocation>
</comment>
<comment type="disruption phenotype">
    <text evidence="3">Inviable cell population (PubMed:33754639). Degron-mediated knockdown leads to decreased cellular levels of Sm-class snRNPs and defects in spliceosome activity (PubMed:33754639).</text>
</comment>
<keyword id="KW-0963">Cytoplasm</keyword>
<keyword id="KW-0507">mRNA processing</keyword>
<keyword id="KW-0508">mRNA splicing</keyword>
<keyword id="KW-0539">Nucleus</keyword>
<keyword id="KW-1185">Reference proteome</keyword>
<evidence type="ECO:0000250" key="1">
    <source>
        <dbReference type="UniProtKB" id="Q9NWZ8"/>
    </source>
</evidence>
<evidence type="ECO:0000269" key="2">
    <source>
    </source>
</evidence>
<evidence type="ECO:0000269" key="3">
    <source>
    </source>
</evidence>
<evidence type="ECO:0000303" key="4">
    <source>
    </source>
</evidence>
<evidence type="ECO:0000305" key="5">
    <source>
    </source>
</evidence>
<evidence type="ECO:0000312" key="6">
    <source>
        <dbReference type="PomBase" id="SPBC16H5.15"/>
    </source>
</evidence>
<gene>
    <name evidence="4" type="primary">gem8</name>
    <name evidence="6" type="ORF">SPBC16H5.15</name>
</gene>
<sequence length="166" mass="19685">MSSEITEGDLQKFHDEHFNAKAVNLWNVAFAQNDRGGNSESANVEYTQSVERYPDGTIRTLTDEQILWFRESEKRELMWKKEKEQLLKEKELRQKALDKERMVSSKPETNPKTPISLKELKDIEIYQNQFHYSAYEILEEEKILDNIFRKFTALPIKYWPATPIRG</sequence>